<protein>
    <recommendedName>
        <fullName>Protein Rev</fullName>
    </recommendedName>
    <alternativeName>
        <fullName>Regulator of expression of viral proteins</fullName>
    </alternativeName>
</protein>
<accession>P04615</accession>
<feature type="chain" id="PRO_0000085289" description="Protein Rev">
    <location>
        <begin position="1"/>
        <end position="100"/>
    </location>
</feature>
<feature type="region of interest" description="Homomultimerization" evidence="1">
    <location>
        <begin position="16"/>
        <end position="24"/>
    </location>
</feature>
<feature type="region of interest" description="Disordered" evidence="2">
    <location>
        <begin position="22"/>
        <end position="42"/>
    </location>
</feature>
<feature type="short sequence motif" description="Nuclear localization signal and RNA-binding (RRE)" evidence="1">
    <location>
        <begin position="35"/>
        <end position="49"/>
    </location>
</feature>
<feature type="short sequence motif" description="Nuclear export signal and binding to XPO1" evidence="1">
    <location>
        <begin position="71"/>
        <end position="82"/>
    </location>
</feature>
<feature type="compositionally biased region" description="Polar residues" evidence="2">
    <location>
        <begin position="22"/>
        <end position="34"/>
    </location>
</feature>
<evidence type="ECO:0000250" key="1"/>
<evidence type="ECO:0000256" key="2">
    <source>
        <dbReference type="SAM" id="MobiDB-lite"/>
    </source>
</evidence>
<evidence type="ECO:0000269" key="3">
    <source>
    </source>
</evidence>
<organismHost>
    <name type="scientific">Homo sapiens</name>
    <name type="common">Human</name>
    <dbReference type="NCBI Taxonomy" id="9606"/>
</organismHost>
<gene>
    <name type="primary">rev</name>
</gene>
<dbReference type="EMBL" id="M15390">
    <property type="protein sequence ID" value="AAB00769.1"/>
    <property type="molecule type" value="Genomic_DNA"/>
</dbReference>
<dbReference type="EMBL" id="X05291">
    <property type="protein sequence ID" value="CAA28913.1"/>
    <property type="molecule type" value="Genomic_RNA"/>
</dbReference>
<dbReference type="PIR" id="F26262">
    <property type="entry name" value="VKLJG2"/>
</dbReference>
<dbReference type="SMR" id="P04615"/>
<dbReference type="Proteomes" id="UP000007426">
    <property type="component" value="Genome"/>
</dbReference>
<dbReference type="Proteomes" id="UP000246871">
    <property type="component" value="Segment"/>
</dbReference>
<dbReference type="GO" id="GO:0030430">
    <property type="term" value="C:host cell cytoplasm"/>
    <property type="evidence" value="ECO:0007669"/>
    <property type="project" value="UniProtKB-SubCell"/>
</dbReference>
<dbReference type="GO" id="GO:0044196">
    <property type="term" value="C:host cell nucleolus"/>
    <property type="evidence" value="ECO:0007669"/>
    <property type="project" value="UniProtKB-SubCell"/>
</dbReference>
<dbReference type="GO" id="GO:0003700">
    <property type="term" value="F:DNA-binding transcription factor activity"/>
    <property type="evidence" value="ECO:0007669"/>
    <property type="project" value="InterPro"/>
</dbReference>
<dbReference type="GO" id="GO:0003723">
    <property type="term" value="F:RNA binding"/>
    <property type="evidence" value="ECO:0007669"/>
    <property type="project" value="UniProtKB-KW"/>
</dbReference>
<dbReference type="GO" id="GO:0051028">
    <property type="term" value="P:mRNA transport"/>
    <property type="evidence" value="ECO:0007669"/>
    <property type="project" value="UniProtKB-KW"/>
</dbReference>
<dbReference type="Gene3D" id="6.10.140.630">
    <property type="match status" value="1"/>
</dbReference>
<dbReference type="InterPro" id="IPR000625">
    <property type="entry name" value="REV_protein"/>
</dbReference>
<dbReference type="Pfam" id="PF00424">
    <property type="entry name" value="REV"/>
    <property type="match status" value="1"/>
</dbReference>
<name>REV_HV2RO</name>
<comment type="function">
    <text evidence="1 3">Escorts unspliced or incompletely spliced viral pre-mRNAs (late transcripts) out of the nucleus of infected cells. These pre-mRNAs carry a recognition sequence called Rev responsive element (RRE) located in the env gene, that is not present in fully spliced viral mRNAs (early transcripts). This function is essential since most viral proteins are translated from unspliced or partially spliced pre-mRNAs which cannot exit the nucleus by the pathway used by fully processed cellular mRNAs (By similarity).</text>
</comment>
<comment type="subunit">
    <text evidence="1">Homomultimer; when bound to the RRE. Multimeric assembly is essential for activity (By similarity).</text>
</comment>
<comment type="subcellular location">
    <subcellularLocation>
        <location>Host nucleus</location>
        <location>Host nucleolus</location>
    </subcellularLocation>
    <subcellularLocation>
        <location>Host cytoplasm</location>
    </subcellularLocation>
    <text evidence="1">The presence of both nuclear import and nuclear export signals leads to continuous shuttling between the nucleus and cytoplasm.</text>
</comment>
<comment type="domain">
    <text evidence="1">The RNA-binding motif binds to the RRE, a stem-and-loop structure present in incompletely spliced viral pre-mRNAs. This region also contains the NLS which mediates nuclear localization. These overlapping functions prevent Rev bound to RRE from undesirable return to the nucleus. When Rev binds the RRE, the NLS becomes masked while the NES remains accessible (By similarity).</text>
</comment>
<sequence>MNERADEEGLQRKLRLIRLLHQTNPYPQGPGTASQRRNRRRRWKQRWRQILALADSIYTFPDPPADSPLDQTIQHLQGLTIQELPDPPTHLPESQRLAET</sequence>
<reference key="1">
    <citation type="journal article" date="1987" name="Nature">
        <title>Genome organization and transactivation of the human immunodeficiency virus type 2.</title>
        <authorList>
            <person name="Guyader M."/>
            <person name="Emerman M."/>
            <person name="Sonigo P."/>
            <person name="Clavel F."/>
            <person name="Montagnier L."/>
            <person name="Alizon M."/>
        </authorList>
    </citation>
    <scope>NUCLEOTIDE SEQUENCE [GENOMIC DNA]</scope>
</reference>
<reference key="2">
    <citation type="journal article" date="1990" name="J. Virol.">
        <title>Function of the human immunodeficiency virus types 1 and 2 Rev proteins is dependent on their ability to interact with a structured region present in env gene mRNA.</title>
        <authorList>
            <person name="Dillon P.J."/>
            <person name="Nelbock P."/>
            <person name="Perkins A."/>
            <person name="Rosen C.A."/>
        </authorList>
    </citation>
    <scope>FUNCTION</scope>
</reference>
<organism>
    <name type="scientific">Human immunodeficiency virus type 2 subtype A (isolate ROD)</name>
    <name type="common">HIV-2</name>
    <dbReference type="NCBI Taxonomy" id="11720"/>
    <lineage>
        <taxon>Viruses</taxon>
        <taxon>Riboviria</taxon>
        <taxon>Pararnavirae</taxon>
        <taxon>Artverviricota</taxon>
        <taxon>Revtraviricetes</taxon>
        <taxon>Ortervirales</taxon>
        <taxon>Retroviridae</taxon>
        <taxon>Orthoretrovirinae</taxon>
        <taxon>Lentivirus</taxon>
        <taxon>Human immunodeficiency virus 2</taxon>
    </lineage>
</organism>
<keyword id="KW-0014">AIDS</keyword>
<keyword id="KW-1035">Host cytoplasm</keyword>
<keyword id="KW-1048">Host nucleus</keyword>
<keyword id="KW-0509">mRNA transport</keyword>
<keyword id="KW-0694">RNA-binding</keyword>
<keyword id="KW-0813">Transport</keyword>
<proteinExistence type="inferred from homology"/>